<reference key="1">
    <citation type="journal article" date="2009" name="PLoS Genet.">
        <title>Organised genome dynamics in the Escherichia coli species results in highly diverse adaptive paths.</title>
        <authorList>
            <person name="Touchon M."/>
            <person name="Hoede C."/>
            <person name="Tenaillon O."/>
            <person name="Barbe V."/>
            <person name="Baeriswyl S."/>
            <person name="Bidet P."/>
            <person name="Bingen E."/>
            <person name="Bonacorsi S."/>
            <person name="Bouchier C."/>
            <person name="Bouvet O."/>
            <person name="Calteau A."/>
            <person name="Chiapello H."/>
            <person name="Clermont O."/>
            <person name="Cruveiller S."/>
            <person name="Danchin A."/>
            <person name="Diard M."/>
            <person name="Dossat C."/>
            <person name="Karoui M.E."/>
            <person name="Frapy E."/>
            <person name="Garry L."/>
            <person name="Ghigo J.M."/>
            <person name="Gilles A.M."/>
            <person name="Johnson J."/>
            <person name="Le Bouguenec C."/>
            <person name="Lescat M."/>
            <person name="Mangenot S."/>
            <person name="Martinez-Jehanne V."/>
            <person name="Matic I."/>
            <person name="Nassif X."/>
            <person name="Oztas S."/>
            <person name="Petit M.A."/>
            <person name="Pichon C."/>
            <person name="Rouy Z."/>
            <person name="Ruf C.S."/>
            <person name="Schneider D."/>
            <person name="Tourret J."/>
            <person name="Vacherie B."/>
            <person name="Vallenet D."/>
            <person name="Medigue C."/>
            <person name="Rocha E.P.C."/>
            <person name="Denamur E."/>
        </authorList>
    </citation>
    <scope>NUCLEOTIDE SEQUENCE [LARGE SCALE GENOMIC DNA]</scope>
    <source>
        <strain>S88 / ExPEC</strain>
    </source>
</reference>
<protein>
    <recommendedName>
        <fullName evidence="1">Low affinity potassium transport system protein Kup</fullName>
    </recommendedName>
    <alternativeName>
        <fullName evidence="1">Kup system potassium uptake protein</fullName>
    </alternativeName>
</protein>
<proteinExistence type="inferred from homology"/>
<organism>
    <name type="scientific">Escherichia coli O45:K1 (strain S88 / ExPEC)</name>
    <dbReference type="NCBI Taxonomy" id="585035"/>
    <lineage>
        <taxon>Bacteria</taxon>
        <taxon>Pseudomonadati</taxon>
        <taxon>Pseudomonadota</taxon>
        <taxon>Gammaproteobacteria</taxon>
        <taxon>Enterobacterales</taxon>
        <taxon>Enterobacteriaceae</taxon>
        <taxon>Escherichia</taxon>
    </lineage>
</organism>
<sequence>MSTDNKQSLPAITLAAIGVVYGDIGTSPLYTLRECLSGQFGFGVERDAVFGFLSLIFWLLIFVVSIKYLTFVMRADNAGEGGILTLMSLAGRNTSARTTSMLVIMGLIGGSFFYGEVVITPAISVMSAIEGLEIVAPQLDTWIVPLSIIVLTLLFMIQKHGTAMVGKLFAPIMLTWFLILAGLGLRSIIANPEVLHALNPMWAVHFFLEYKTVSFIALGAVVLSITGVEALYADMGHFGKFPIRLAWFTVVLPSLTLNYFGQGALLLKNPEAIKNPFFLLAPDWALIPLLIIAALATVIASQAVISGVFSLTRQAVRLGYLSPMRIIHTSEMESGQIYIPFVNWMLYVAVVIVIVSFEHSSNLAAAYGIAVTGTMVLTSILSTTVARQNWHWNKYFVALILIAFLCVDIPLFTANLDKLLSGGWLPLSLGTVMFIVMTTWKSERFRLLRRMHEHGNSLEAMIASLEKSPPVRVPGTAVYMSRAINVIPFALMHNLKHNKVLHERVILLTLRTEDAPYVHNVRRVQIEQLSPTFWRVVASYGWRETPNVEEVFHRCGLEGLSCRMMETSFFMSHESLILGKRPWYLRLRGKLYLLLQRNALRAPDQFEIPPNRVIELGTQVEI</sequence>
<feature type="chain" id="PRO_1000190267" description="Low affinity potassium transport system protein Kup">
    <location>
        <begin position="1"/>
        <end position="622"/>
    </location>
</feature>
<feature type="transmembrane region" description="Helical" evidence="1">
    <location>
        <begin position="9"/>
        <end position="29"/>
    </location>
</feature>
<feature type="transmembrane region" description="Helical" evidence="1">
    <location>
        <begin position="49"/>
        <end position="69"/>
    </location>
</feature>
<feature type="transmembrane region" description="Helical" evidence="1">
    <location>
        <begin position="103"/>
        <end position="123"/>
    </location>
</feature>
<feature type="transmembrane region" description="Helical" evidence="1">
    <location>
        <begin position="137"/>
        <end position="157"/>
    </location>
</feature>
<feature type="transmembrane region" description="Helical" evidence="1">
    <location>
        <begin position="165"/>
        <end position="185"/>
    </location>
</feature>
<feature type="transmembrane region" description="Helical" evidence="1">
    <location>
        <begin position="213"/>
        <end position="233"/>
    </location>
</feature>
<feature type="transmembrane region" description="Helical" evidence="1">
    <location>
        <begin position="247"/>
        <end position="267"/>
    </location>
</feature>
<feature type="transmembrane region" description="Helical" evidence="1">
    <location>
        <begin position="276"/>
        <end position="296"/>
    </location>
</feature>
<feature type="transmembrane region" description="Helical" evidence="1">
    <location>
        <begin position="337"/>
        <end position="357"/>
    </location>
</feature>
<feature type="transmembrane region" description="Helical" evidence="1">
    <location>
        <begin position="363"/>
        <end position="383"/>
    </location>
</feature>
<feature type="transmembrane region" description="Helical" evidence="1">
    <location>
        <begin position="396"/>
        <end position="416"/>
    </location>
</feature>
<feature type="transmembrane region" description="Helical" evidence="1">
    <location>
        <begin position="419"/>
        <end position="439"/>
    </location>
</feature>
<keyword id="KW-0997">Cell inner membrane</keyword>
<keyword id="KW-1003">Cell membrane</keyword>
<keyword id="KW-0406">Ion transport</keyword>
<keyword id="KW-0472">Membrane</keyword>
<keyword id="KW-0630">Potassium</keyword>
<keyword id="KW-0633">Potassium transport</keyword>
<keyword id="KW-1185">Reference proteome</keyword>
<keyword id="KW-0769">Symport</keyword>
<keyword id="KW-0812">Transmembrane</keyword>
<keyword id="KW-1133">Transmembrane helix</keyword>
<keyword id="KW-0813">Transport</keyword>
<gene>
    <name evidence="1" type="primary">kup</name>
    <name type="ordered locus">ECS88_4169</name>
</gene>
<name>KUP_ECO45</name>
<evidence type="ECO:0000255" key="1">
    <source>
        <dbReference type="HAMAP-Rule" id="MF_01522"/>
    </source>
</evidence>
<accession>B7MGG7</accession>
<comment type="function">
    <text evidence="1">Responsible for the low-affinity transport of potassium into the cell. Likely operates as a K(+):H(+) symporter.</text>
</comment>
<comment type="catalytic activity">
    <reaction evidence="1">
        <text>K(+)(in) + H(+)(in) = K(+)(out) + H(+)(out)</text>
        <dbReference type="Rhea" id="RHEA:28490"/>
        <dbReference type="ChEBI" id="CHEBI:15378"/>
        <dbReference type="ChEBI" id="CHEBI:29103"/>
    </reaction>
    <physiologicalReaction direction="right-to-left" evidence="1">
        <dbReference type="Rhea" id="RHEA:28492"/>
    </physiologicalReaction>
</comment>
<comment type="subcellular location">
    <subcellularLocation>
        <location evidence="1">Cell inner membrane</location>
        <topology evidence="1">Multi-pass membrane protein</topology>
    </subcellularLocation>
</comment>
<comment type="similarity">
    <text evidence="1">Belongs to the HAK/KUP transporter (TC 2.A.72) family.</text>
</comment>
<dbReference type="EMBL" id="CU928161">
    <property type="protein sequence ID" value="CAR05375.1"/>
    <property type="molecule type" value="Genomic_DNA"/>
</dbReference>
<dbReference type="RefSeq" id="WP_000102319.1">
    <property type="nucleotide sequence ID" value="NC_011742.1"/>
</dbReference>
<dbReference type="GeneID" id="75205465"/>
<dbReference type="KEGG" id="ecz:ECS88_4169"/>
<dbReference type="HOGENOM" id="CLU_008142_4_2_6"/>
<dbReference type="Proteomes" id="UP000000747">
    <property type="component" value="Chromosome"/>
</dbReference>
<dbReference type="GO" id="GO:0005886">
    <property type="term" value="C:plasma membrane"/>
    <property type="evidence" value="ECO:0007669"/>
    <property type="project" value="UniProtKB-SubCell"/>
</dbReference>
<dbReference type="GO" id="GO:0015079">
    <property type="term" value="F:potassium ion transmembrane transporter activity"/>
    <property type="evidence" value="ECO:0007669"/>
    <property type="project" value="UniProtKB-UniRule"/>
</dbReference>
<dbReference type="GO" id="GO:0015293">
    <property type="term" value="F:symporter activity"/>
    <property type="evidence" value="ECO:0007669"/>
    <property type="project" value="UniProtKB-UniRule"/>
</dbReference>
<dbReference type="HAMAP" id="MF_01522">
    <property type="entry name" value="Kup"/>
    <property type="match status" value="1"/>
</dbReference>
<dbReference type="InterPro" id="IPR003855">
    <property type="entry name" value="K+_transporter"/>
</dbReference>
<dbReference type="InterPro" id="IPR053952">
    <property type="entry name" value="K_trans_C"/>
</dbReference>
<dbReference type="InterPro" id="IPR053951">
    <property type="entry name" value="K_trans_N"/>
</dbReference>
<dbReference type="InterPro" id="IPR023051">
    <property type="entry name" value="Kup"/>
</dbReference>
<dbReference type="NCBIfam" id="TIGR00794">
    <property type="entry name" value="kup"/>
    <property type="match status" value="1"/>
</dbReference>
<dbReference type="NCBIfam" id="NF008015">
    <property type="entry name" value="PRK10745.1"/>
    <property type="match status" value="1"/>
</dbReference>
<dbReference type="PANTHER" id="PTHR30540:SF79">
    <property type="entry name" value="LOW AFFINITY POTASSIUM TRANSPORT SYSTEM PROTEIN KUP"/>
    <property type="match status" value="1"/>
</dbReference>
<dbReference type="PANTHER" id="PTHR30540">
    <property type="entry name" value="OSMOTIC STRESS POTASSIUM TRANSPORTER"/>
    <property type="match status" value="1"/>
</dbReference>
<dbReference type="Pfam" id="PF02705">
    <property type="entry name" value="K_trans"/>
    <property type="match status" value="1"/>
</dbReference>
<dbReference type="Pfam" id="PF22776">
    <property type="entry name" value="K_trans_C"/>
    <property type="match status" value="1"/>
</dbReference>